<dbReference type="EMBL" id="AF027868">
    <property type="protein sequence ID" value="AAB84444.1"/>
    <property type="molecule type" value="Genomic_DNA"/>
</dbReference>
<dbReference type="EMBL" id="AL009126">
    <property type="protein sequence ID" value="CAB13747.1"/>
    <property type="molecule type" value="Genomic_DNA"/>
</dbReference>
<dbReference type="PIR" id="D69895">
    <property type="entry name" value="D69895"/>
</dbReference>
<dbReference type="RefSeq" id="NP_389736.1">
    <property type="nucleotide sequence ID" value="NC_000964.3"/>
</dbReference>
<dbReference type="RefSeq" id="WP_003231439.1">
    <property type="nucleotide sequence ID" value="NZ_OZ025638.1"/>
</dbReference>
<dbReference type="SMR" id="O34864"/>
<dbReference type="FunCoup" id="O34864">
    <property type="interactions" value="24"/>
</dbReference>
<dbReference type="STRING" id="224308.BSU18540"/>
<dbReference type="PaxDb" id="224308-BSU18540"/>
<dbReference type="EnsemblBacteria" id="CAB13747">
    <property type="protein sequence ID" value="CAB13747"/>
    <property type="gene ID" value="BSU_18540"/>
</dbReference>
<dbReference type="GeneID" id="940099"/>
<dbReference type="KEGG" id="bsu:BSU18540"/>
<dbReference type="PATRIC" id="fig|224308.179.peg.2021"/>
<dbReference type="eggNOG" id="COG2814">
    <property type="taxonomic scope" value="Bacteria"/>
</dbReference>
<dbReference type="InParanoid" id="O34864"/>
<dbReference type="OrthoDB" id="3522477at2"/>
<dbReference type="PhylomeDB" id="O34864"/>
<dbReference type="BioCyc" id="BSUB:BSU18540-MONOMER"/>
<dbReference type="Proteomes" id="UP000001570">
    <property type="component" value="Chromosome"/>
</dbReference>
<dbReference type="GO" id="GO:0005886">
    <property type="term" value="C:plasma membrane"/>
    <property type="evidence" value="ECO:0007669"/>
    <property type="project" value="UniProtKB-SubCell"/>
</dbReference>
<dbReference type="GO" id="GO:0022857">
    <property type="term" value="F:transmembrane transporter activity"/>
    <property type="evidence" value="ECO:0007669"/>
    <property type="project" value="InterPro"/>
</dbReference>
<dbReference type="CDD" id="cd17337">
    <property type="entry name" value="MFS_CsbX"/>
    <property type="match status" value="1"/>
</dbReference>
<dbReference type="Gene3D" id="1.20.1250.20">
    <property type="entry name" value="MFS general substrate transporter like domains"/>
    <property type="match status" value="2"/>
</dbReference>
<dbReference type="InterPro" id="IPR011701">
    <property type="entry name" value="MFS"/>
</dbReference>
<dbReference type="InterPro" id="IPR020846">
    <property type="entry name" value="MFS_dom"/>
</dbReference>
<dbReference type="InterPro" id="IPR036259">
    <property type="entry name" value="MFS_trans_sf"/>
</dbReference>
<dbReference type="InterPro" id="IPR004748">
    <property type="entry name" value="Polyol_permease-like"/>
</dbReference>
<dbReference type="NCBIfam" id="TIGR00897">
    <property type="entry name" value="2A0118"/>
    <property type="match status" value="1"/>
</dbReference>
<dbReference type="PANTHER" id="PTHR23513">
    <property type="entry name" value="INTEGRAL MEMBRANE EFFLUX PROTEIN-RELATED"/>
    <property type="match status" value="1"/>
</dbReference>
<dbReference type="PANTHER" id="PTHR23513:SF6">
    <property type="entry name" value="MAJOR FACILITATOR SUPERFAMILY ASSOCIATED DOMAIN-CONTAINING PROTEIN"/>
    <property type="match status" value="1"/>
</dbReference>
<dbReference type="Pfam" id="PF07690">
    <property type="entry name" value="MFS_1"/>
    <property type="match status" value="1"/>
</dbReference>
<dbReference type="SUPFAM" id="SSF103473">
    <property type="entry name" value="MFS general substrate transporter"/>
    <property type="match status" value="1"/>
</dbReference>
<dbReference type="PROSITE" id="PS50850">
    <property type="entry name" value="MFS"/>
    <property type="match status" value="1"/>
</dbReference>
<gene>
    <name type="primary">yoaB</name>
    <name type="ordered locus">BSU18540</name>
</gene>
<comment type="subcellular location">
    <subcellularLocation>
        <location evidence="3">Cell membrane</location>
        <topology evidence="3">Multi-pass membrane protein</topology>
    </subcellularLocation>
</comment>
<comment type="induction">
    <text evidence="2">Induced by sulfate, part of the yoaDCB operon.</text>
</comment>
<comment type="similarity">
    <text evidence="3">Belongs to the major facilitator superfamily. Sugar transporter (TC 2.A.1.1) family. CsbX subfamily.</text>
</comment>
<reference key="1">
    <citation type="submission" date="1997-11" db="EMBL/GenBank/DDBJ databases">
        <title>Sequence analysis of the Bacillus subtilis chromosome region between the terC and odhAB loci cloned in a yeast artificial chromosome.</title>
        <authorList>
            <person name="Lapidus A."/>
            <person name="Galleron N."/>
            <person name="Sorokin A."/>
            <person name="Ehrlich S.D."/>
        </authorList>
    </citation>
    <scope>NUCLEOTIDE SEQUENCE [GENOMIC DNA]</scope>
</reference>
<reference key="2">
    <citation type="journal article" date="1997" name="Nature">
        <title>The complete genome sequence of the Gram-positive bacterium Bacillus subtilis.</title>
        <authorList>
            <person name="Kunst F."/>
            <person name="Ogasawara N."/>
            <person name="Moszer I."/>
            <person name="Albertini A.M."/>
            <person name="Alloni G."/>
            <person name="Azevedo V."/>
            <person name="Bertero M.G."/>
            <person name="Bessieres P."/>
            <person name="Bolotin A."/>
            <person name="Borchert S."/>
            <person name="Borriss R."/>
            <person name="Boursier L."/>
            <person name="Brans A."/>
            <person name="Braun M."/>
            <person name="Brignell S.C."/>
            <person name="Bron S."/>
            <person name="Brouillet S."/>
            <person name="Bruschi C.V."/>
            <person name="Caldwell B."/>
            <person name="Capuano V."/>
            <person name="Carter N.M."/>
            <person name="Choi S.-K."/>
            <person name="Codani J.-J."/>
            <person name="Connerton I.F."/>
            <person name="Cummings N.J."/>
            <person name="Daniel R.A."/>
            <person name="Denizot F."/>
            <person name="Devine K.M."/>
            <person name="Duesterhoeft A."/>
            <person name="Ehrlich S.D."/>
            <person name="Emmerson P.T."/>
            <person name="Entian K.-D."/>
            <person name="Errington J."/>
            <person name="Fabret C."/>
            <person name="Ferrari E."/>
            <person name="Foulger D."/>
            <person name="Fritz C."/>
            <person name="Fujita M."/>
            <person name="Fujita Y."/>
            <person name="Fuma S."/>
            <person name="Galizzi A."/>
            <person name="Galleron N."/>
            <person name="Ghim S.-Y."/>
            <person name="Glaser P."/>
            <person name="Goffeau A."/>
            <person name="Golightly E.J."/>
            <person name="Grandi G."/>
            <person name="Guiseppi G."/>
            <person name="Guy B.J."/>
            <person name="Haga K."/>
            <person name="Haiech J."/>
            <person name="Harwood C.R."/>
            <person name="Henaut A."/>
            <person name="Hilbert H."/>
            <person name="Holsappel S."/>
            <person name="Hosono S."/>
            <person name="Hullo M.-F."/>
            <person name="Itaya M."/>
            <person name="Jones L.-M."/>
            <person name="Joris B."/>
            <person name="Karamata D."/>
            <person name="Kasahara Y."/>
            <person name="Klaerr-Blanchard M."/>
            <person name="Klein C."/>
            <person name="Kobayashi Y."/>
            <person name="Koetter P."/>
            <person name="Koningstein G."/>
            <person name="Krogh S."/>
            <person name="Kumano M."/>
            <person name="Kurita K."/>
            <person name="Lapidus A."/>
            <person name="Lardinois S."/>
            <person name="Lauber J."/>
            <person name="Lazarevic V."/>
            <person name="Lee S.-M."/>
            <person name="Levine A."/>
            <person name="Liu H."/>
            <person name="Masuda S."/>
            <person name="Mauel C."/>
            <person name="Medigue C."/>
            <person name="Medina N."/>
            <person name="Mellado R.P."/>
            <person name="Mizuno M."/>
            <person name="Moestl D."/>
            <person name="Nakai S."/>
            <person name="Noback M."/>
            <person name="Noone D."/>
            <person name="O'Reilly M."/>
            <person name="Ogawa K."/>
            <person name="Ogiwara A."/>
            <person name="Oudega B."/>
            <person name="Park S.-H."/>
            <person name="Parro V."/>
            <person name="Pohl T.M."/>
            <person name="Portetelle D."/>
            <person name="Porwollik S."/>
            <person name="Prescott A.M."/>
            <person name="Presecan E."/>
            <person name="Pujic P."/>
            <person name="Purnelle B."/>
            <person name="Rapoport G."/>
            <person name="Rey M."/>
            <person name="Reynolds S."/>
            <person name="Rieger M."/>
            <person name="Rivolta C."/>
            <person name="Rocha E."/>
            <person name="Roche B."/>
            <person name="Rose M."/>
            <person name="Sadaie Y."/>
            <person name="Sato T."/>
            <person name="Scanlan E."/>
            <person name="Schleich S."/>
            <person name="Schroeter R."/>
            <person name="Scoffone F."/>
            <person name="Sekiguchi J."/>
            <person name="Sekowska A."/>
            <person name="Seror S.J."/>
            <person name="Serror P."/>
            <person name="Shin B.-S."/>
            <person name="Soldo B."/>
            <person name="Sorokin A."/>
            <person name="Tacconi E."/>
            <person name="Takagi T."/>
            <person name="Takahashi H."/>
            <person name="Takemaru K."/>
            <person name="Takeuchi M."/>
            <person name="Tamakoshi A."/>
            <person name="Tanaka T."/>
            <person name="Terpstra P."/>
            <person name="Tognoni A."/>
            <person name="Tosato V."/>
            <person name="Uchiyama S."/>
            <person name="Vandenbol M."/>
            <person name="Vannier F."/>
            <person name="Vassarotti A."/>
            <person name="Viari A."/>
            <person name="Wambutt R."/>
            <person name="Wedler E."/>
            <person name="Wedler H."/>
            <person name="Weitzenegger T."/>
            <person name="Winters P."/>
            <person name="Wipat A."/>
            <person name="Yamamoto H."/>
            <person name="Yamane K."/>
            <person name="Yasumoto K."/>
            <person name="Yata K."/>
            <person name="Yoshida K."/>
            <person name="Yoshikawa H.-F."/>
            <person name="Zumstein E."/>
            <person name="Yoshikawa H."/>
            <person name="Danchin A."/>
        </authorList>
    </citation>
    <scope>NUCLEOTIDE SEQUENCE [LARGE SCALE GENOMIC DNA]</scope>
    <source>
        <strain>168</strain>
    </source>
</reference>
<reference key="3">
    <citation type="journal article" date="2002" name="J. Bacteriol.">
        <title>Global expression profile of Bacillus subtilis grown in the presence of sulfate or methionine.</title>
        <authorList>
            <person name="Auger S."/>
            <person name="Danchin A."/>
            <person name="Martin-Verstraete I."/>
        </authorList>
    </citation>
    <scope>INDUCTION</scope>
    <scope>OPERON STRUCTURE</scope>
    <source>
        <strain>168</strain>
    </source>
</reference>
<feature type="chain" id="PRO_0000050495" description="Putative transporter YoaB">
    <location>
        <begin position="1"/>
        <end position="414"/>
    </location>
</feature>
<feature type="topological domain" description="Cytoplasmic" evidence="1">
    <location>
        <begin position="1"/>
        <end position="11"/>
    </location>
</feature>
<feature type="transmembrane region" description="Helical; Name=1" evidence="1">
    <location>
        <begin position="12"/>
        <end position="32"/>
    </location>
</feature>
<feature type="topological domain" description="Extracellular" evidence="1">
    <location>
        <begin position="33"/>
        <end position="47"/>
    </location>
</feature>
<feature type="transmembrane region" description="Helical; Name=2" evidence="1">
    <location>
        <begin position="48"/>
        <end position="68"/>
    </location>
</feature>
<feature type="topological domain" description="Cytoplasmic" evidence="1">
    <location>
        <begin position="69"/>
        <end position="75"/>
    </location>
</feature>
<feature type="transmembrane region" description="Helical; Name=3" evidence="1">
    <location>
        <begin position="76"/>
        <end position="96"/>
    </location>
</feature>
<feature type="topological domain" description="Extracellular" evidence="1">
    <location>
        <begin position="97"/>
        <end position="107"/>
    </location>
</feature>
<feature type="transmembrane region" description="Helical; Name=4" evidence="1">
    <location>
        <begin position="108"/>
        <end position="128"/>
    </location>
</feature>
<feature type="topological domain" description="Cytoplasmic" evidence="1">
    <location>
        <begin position="129"/>
        <end position="136"/>
    </location>
</feature>
<feature type="transmembrane region" description="Helical; Name=5" evidence="1">
    <location>
        <begin position="137"/>
        <end position="157"/>
    </location>
</feature>
<feature type="topological domain" description="Extracellular" evidence="1">
    <location>
        <begin position="158"/>
        <end position="167"/>
    </location>
</feature>
<feature type="transmembrane region" description="Helical; Name=6" evidence="1">
    <location>
        <begin position="168"/>
        <end position="188"/>
    </location>
</feature>
<feature type="topological domain" description="Cytoplasmic" evidence="1">
    <location>
        <begin position="189"/>
        <end position="219"/>
    </location>
</feature>
<feature type="transmembrane region" description="Helical; Name=7" evidence="1">
    <location>
        <begin position="220"/>
        <end position="240"/>
    </location>
</feature>
<feature type="topological domain" description="Extracellular" evidence="1">
    <location>
        <begin position="241"/>
        <end position="255"/>
    </location>
</feature>
<feature type="transmembrane region" description="Helical; Name=8" evidence="1">
    <location>
        <begin position="256"/>
        <end position="276"/>
    </location>
</feature>
<feature type="topological domain" description="Cytoplasmic" evidence="1">
    <location>
        <begin position="277"/>
        <end position="286"/>
    </location>
</feature>
<feature type="transmembrane region" description="Helical; Name=9" evidence="1">
    <location>
        <begin position="287"/>
        <end position="307"/>
    </location>
</feature>
<feature type="topological domain" description="Extracellular" evidence="1">
    <location>
        <begin position="308"/>
        <end position="316"/>
    </location>
</feature>
<feature type="transmembrane region" description="Helical; Name=10" evidence="1">
    <location>
        <begin position="317"/>
        <end position="337"/>
    </location>
</feature>
<feature type="topological domain" description="Cytoplasmic" evidence="1">
    <location>
        <begin position="338"/>
        <end position="343"/>
    </location>
</feature>
<feature type="transmembrane region" description="Helical; Name=11" evidence="1">
    <location>
        <begin position="344"/>
        <end position="364"/>
    </location>
</feature>
<feature type="topological domain" description="Extracellular" evidence="1">
    <location>
        <begin position="365"/>
        <end position="375"/>
    </location>
</feature>
<feature type="transmembrane region" description="Helical; Name=12" evidence="1">
    <location>
        <begin position="376"/>
        <end position="398"/>
    </location>
</feature>
<feature type="topological domain" description="Cytoplasmic" evidence="1">
    <location>
        <begin position="399"/>
        <end position="414"/>
    </location>
</feature>
<name>YOAB_BACSU</name>
<keyword id="KW-1003">Cell membrane</keyword>
<keyword id="KW-0472">Membrane</keyword>
<keyword id="KW-1185">Reference proteome</keyword>
<keyword id="KW-0812">Transmembrane</keyword>
<keyword id="KW-1133">Transmembrane helix</keyword>
<keyword id="KW-0813">Transport</keyword>
<sequence length="414" mass="45377">MLDKIGIPKRLAWGFLGVVLFMMGDGLEQGWLSPFLIENGLTVQQSASIFSIYGIALAIASWFSGVCLEAFGAKRTMFMGLLFYVIGTAAFIVFGFEQLNLPVMYVTYFVKGLGYPLFAYSFLTWVIYRTPQSKLSTAVGWFWIAYCLGMFVFGAWYSSYAIKAFGYLNTLWSSIFWVCLGAFFALFINKDRFEKKKRKRSETAEELLKGVTILFTNPRVLTGGIIRIINSIGTYGFPVFLPMHMAQHGISTNVWLQIWGTIFLGNIVFNLIFGIVGDKFGWKNTVIWFGGVGCGIFTVLLYYAPVFSGGSLAVVSVIGFIWGGLLAGYVPIGAIVPTVAGKDKGAAMSVLNLAAGLSAFVGPALAWLFIGLVGAQGVVWIFAALYLASAVLTKCIHIPEEKAVKEETSPQYAS</sequence>
<evidence type="ECO:0000255" key="1"/>
<evidence type="ECO:0000269" key="2">
    <source>
    </source>
</evidence>
<evidence type="ECO:0000305" key="3"/>
<accession>O34864</accession>
<organism>
    <name type="scientific">Bacillus subtilis (strain 168)</name>
    <dbReference type="NCBI Taxonomy" id="224308"/>
    <lineage>
        <taxon>Bacteria</taxon>
        <taxon>Bacillati</taxon>
        <taxon>Bacillota</taxon>
        <taxon>Bacilli</taxon>
        <taxon>Bacillales</taxon>
        <taxon>Bacillaceae</taxon>
        <taxon>Bacillus</taxon>
    </lineage>
</organism>
<proteinExistence type="evidence at transcript level"/>
<protein>
    <recommendedName>
        <fullName>Putative transporter YoaB</fullName>
    </recommendedName>
</protein>